<dbReference type="EMBL" id="X80199">
    <property type="protein sequence ID" value="CAC27699.1"/>
    <property type="molecule type" value="mRNA"/>
</dbReference>
<dbReference type="EMBL" id="AK292425">
    <property type="protein sequence ID" value="BAF85114.1"/>
    <property type="molecule type" value="mRNA"/>
</dbReference>
<dbReference type="EMBL" id="AC068669">
    <property type="status" value="NOT_ANNOTATED_CDS"/>
    <property type="molecule type" value="Genomic_DNA"/>
</dbReference>
<dbReference type="EMBL" id="BC044656">
    <property type="protein sequence ID" value="AAH44656.1"/>
    <property type="molecule type" value="mRNA"/>
</dbReference>
<dbReference type="EMBL" id="BC050526">
    <property type="protein sequence ID" value="AAH50526.1"/>
    <property type="molecule type" value="mRNA"/>
</dbReference>
<dbReference type="CCDS" id="CCDS11362.1"/>
<dbReference type="RefSeq" id="NP_031385.2">
    <property type="nucleotide sequence ID" value="NM_007359.4"/>
</dbReference>
<dbReference type="RefSeq" id="XP_005257220.1">
    <property type="nucleotide sequence ID" value="XM_005257163.3"/>
</dbReference>
<dbReference type="RefSeq" id="XP_054171455.1">
    <property type="nucleotide sequence ID" value="XM_054315480.1"/>
</dbReference>
<dbReference type="PDB" id="2HYI">
    <property type="method" value="X-ray"/>
    <property type="resolution" value="2.30 A"/>
    <property type="chains" value="D/J=170-246"/>
</dbReference>
<dbReference type="PDB" id="2J0Q">
    <property type="method" value="X-ray"/>
    <property type="resolution" value="3.20 A"/>
    <property type="chains" value="I/T=137-286"/>
</dbReference>
<dbReference type="PDB" id="2J0S">
    <property type="method" value="X-ray"/>
    <property type="resolution" value="2.21 A"/>
    <property type="chains" value="T=137-286"/>
</dbReference>
<dbReference type="PDB" id="2J0U">
    <property type="method" value="X-ray"/>
    <property type="resolution" value="3.00 A"/>
    <property type="chains" value="T=137-250"/>
</dbReference>
<dbReference type="PDB" id="2XB2">
    <property type="method" value="X-ray"/>
    <property type="resolution" value="3.40 A"/>
    <property type="chains" value="S/T=137-286"/>
</dbReference>
<dbReference type="PDB" id="3EX7">
    <property type="method" value="X-ray"/>
    <property type="resolution" value="2.30 A"/>
    <property type="chains" value="D/I=138-283"/>
</dbReference>
<dbReference type="PDB" id="5XJC">
    <property type="method" value="EM"/>
    <property type="resolution" value="3.60 A"/>
    <property type="chains" value="x=1-703"/>
</dbReference>
<dbReference type="PDB" id="5YZG">
    <property type="method" value="EM"/>
    <property type="resolution" value="4.10 A"/>
    <property type="chains" value="x=1-703"/>
</dbReference>
<dbReference type="PDB" id="6ICZ">
    <property type="method" value="EM"/>
    <property type="resolution" value="3.00 A"/>
    <property type="chains" value="x=1-703"/>
</dbReference>
<dbReference type="PDB" id="7W59">
    <property type="method" value="EM"/>
    <property type="resolution" value="3.60 A"/>
    <property type="chains" value="x=1-703"/>
</dbReference>
<dbReference type="PDB" id="7W5A">
    <property type="method" value="EM"/>
    <property type="resolution" value="3.60 A"/>
    <property type="chains" value="x=1-703"/>
</dbReference>
<dbReference type="PDB" id="7W5B">
    <property type="method" value="EM"/>
    <property type="resolution" value="4.30 A"/>
    <property type="chains" value="x=1-703"/>
</dbReference>
<dbReference type="PDB" id="8I0W">
    <property type="method" value="EM"/>
    <property type="resolution" value="3.40 A"/>
    <property type="chains" value="x=1-703"/>
</dbReference>
<dbReference type="PDBsum" id="2HYI"/>
<dbReference type="PDBsum" id="2J0Q"/>
<dbReference type="PDBsum" id="2J0S"/>
<dbReference type="PDBsum" id="2J0U"/>
<dbReference type="PDBsum" id="2XB2"/>
<dbReference type="PDBsum" id="3EX7"/>
<dbReference type="PDBsum" id="5XJC"/>
<dbReference type="PDBsum" id="5YZG"/>
<dbReference type="PDBsum" id="6ICZ"/>
<dbReference type="PDBsum" id="7W59"/>
<dbReference type="PDBsum" id="7W5A"/>
<dbReference type="PDBsum" id="7W5B"/>
<dbReference type="PDBsum" id="8I0W"/>
<dbReference type="EMDB" id="EMD-32317"/>
<dbReference type="EMDB" id="EMD-32319"/>
<dbReference type="EMDB" id="EMD-32321"/>
<dbReference type="EMDB" id="EMD-35113"/>
<dbReference type="EMDB" id="EMD-6721"/>
<dbReference type="EMDB" id="EMD-6864"/>
<dbReference type="EMDB" id="EMD-9645"/>
<dbReference type="SMR" id="O15234"/>
<dbReference type="BioGRID" id="116475">
    <property type="interactions" value="158"/>
</dbReference>
<dbReference type="ComplexPortal" id="CPX-1941">
    <property type="entry name" value="Exon junction core complex, MAGOH variant"/>
</dbReference>
<dbReference type="ComplexPortal" id="CPX-682">
    <property type="entry name" value="Exon junction core complex, MAGOHB variant"/>
</dbReference>
<dbReference type="CORUM" id="O15234"/>
<dbReference type="DIP" id="DIP-33288N"/>
<dbReference type="ELM" id="O15234"/>
<dbReference type="FunCoup" id="O15234">
    <property type="interactions" value="4067"/>
</dbReference>
<dbReference type="IntAct" id="O15234">
    <property type="interactions" value="106"/>
</dbReference>
<dbReference type="MINT" id="O15234"/>
<dbReference type="STRING" id="9606.ENSP00000264645"/>
<dbReference type="TCDB" id="3.A.18.1.1">
    <property type="family name" value="the nuclear mrna exporter (mrna-e) family"/>
</dbReference>
<dbReference type="GlyGen" id="O15234">
    <property type="glycosylation" value="2 sites, 1 O-linked glycan (1 site)"/>
</dbReference>
<dbReference type="iPTMnet" id="O15234"/>
<dbReference type="PhosphoSitePlus" id="O15234"/>
<dbReference type="BioMuta" id="CASC3"/>
<dbReference type="jPOST" id="O15234"/>
<dbReference type="MassIVE" id="O15234"/>
<dbReference type="PaxDb" id="9606-ENSP00000264645"/>
<dbReference type="PeptideAtlas" id="O15234"/>
<dbReference type="ProteomicsDB" id="48528"/>
<dbReference type="Pumba" id="O15234"/>
<dbReference type="TopDownProteomics" id="O15234"/>
<dbReference type="Antibodypedia" id="16438">
    <property type="antibodies" value="279 antibodies from 29 providers"/>
</dbReference>
<dbReference type="DNASU" id="22794"/>
<dbReference type="Ensembl" id="ENST00000264645.12">
    <property type="protein sequence ID" value="ENSP00000264645.6"/>
    <property type="gene ID" value="ENSG00000108349.18"/>
</dbReference>
<dbReference type="GeneID" id="22794"/>
<dbReference type="KEGG" id="hsa:22794"/>
<dbReference type="MANE-Select" id="ENST00000264645.12">
    <property type="protein sequence ID" value="ENSP00000264645.6"/>
    <property type="RefSeq nucleotide sequence ID" value="NM_007359.5"/>
    <property type="RefSeq protein sequence ID" value="NP_031385.2"/>
</dbReference>
<dbReference type="UCSC" id="uc002hue.4">
    <property type="organism name" value="human"/>
</dbReference>
<dbReference type="AGR" id="HGNC:17040"/>
<dbReference type="CTD" id="22794"/>
<dbReference type="DisGeNET" id="22794"/>
<dbReference type="GeneCards" id="CASC3"/>
<dbReference type="HGNC" id="HGNC:17040">
    <property type="gene designation" value="CASC3"/>
</dbReference>
<dbReference type="HPA" id="ENSG00000108349">
    <property type="expression patterns" value="Low tissue specificity"/>
</dbReference>
<dbReference type="MIM" id="606504">
    <property type="type" value="gene"/>
</dbReference>
<dbReference type="neXtProt" id="NX_O15234"/>
<dbReference type="OpenTargets" id="ENSG00000108349"/>
<dbReference type="PharmGKB" id="PA134948596"/>
<dbReference type="VEuPathDB" id="HostDB:ENSG00000108349"/>
<dbReference type="eggNOG" id="KOG4264">
    <property type="taxonomic scope" value="Eukaryota"/>
</dbReference>
<dbReference type="GeneTree" id="ENSGT00390000006930"/>
<dbReference type="HOGENOM" id="CLU_018976_0_0_1"/>
<dbReference type="InParanoid" id="O15234"/>
<dbReference type="OMA" id="NRMEEMS"/>
<dbReference type="OrthoDB" id="657902at2759"/>
<dbReference type="PAN-GO" id="O15234">
    <property type="GO annotations" value="1 GO annotation based on evolutionary models"/>
</dbReference>
<dbReference type="PhylomeDB" id="O15234"/>
<dbReference type="TreeFam" id="TF329663"/>
<dbReference type="PathwayCommons" id="O15234"/>
<dbReference type="Reactome" id="R-HSA-159236">
    <property type="pathway name" value="Transport of Mature mRNA derived from an Intron-Containing Transcript"/>
</dbReference>
<dbReference type="Reactome" id="R-HSA-72163">
    <property type="pathway name" value="mRNA Splicing - Major Pathway"/>
</dbReference>
<dbReference type="Reactome" id="R-HSA-72187">
    <property type="pathway name" value="mRNA 3'-end processing"/>
</dbReference>
<dbReference type="Reactome" id="R-HSA-73856">
    <property type="pathway name" value="RNA Polymerase II Transcription Termination"/>
</dbReference>
<dbReference type="Reactome" id="R-HSA-9010553">
    <property type="pathway name" value="Regulation of expression of SLITs and ROBOs"/>
</dbReference>
<dbReference type="Reactome" id="R-HSA-975957">
    <property type="pathway name" value="Nonsense Mediated Decay (NMD) enhanced by the Exon Junction Complex (EJC)"/>
</dbReference>
<dbReference type="SignaLink" id="O15234"/>
<dbReference type="SIGNOR" id="O15234"/>
<dbReference type="BioGRID-ORCS" id="22794">
    <property type="hits" value="139 hits in 1174 CRISPR screens"/>
</dbReference>
<dbReference type="CD-CODE" id="232F8A39">
    <property type="entry name" value="P-body"/>
</dbReference>
<dbReference type="CD-CODE" id="804901D1">
    <property type="entry name" value="Nuclear speckle"/>
</dbReference>
<dbReference type="CD-CODE" id="DEE660B4">
    <property type="entry name" value="Stress granule"/>
</dbReference>
<dbReference type="ChiTaRS" id="CASC3">
    <property type="organism name" value="human"/>
</dbReference>
<dbReference type="EvolutionaryTrace" id="O15234"/>
<dbReference type="GeneWiki" id="CASC3"/>
<dbReference type="GenomeRNAi" id="22794"/>
<dbReference type="Pharos" id="O15234">
    <property type="development level" value="Tbio"/>
</dbReference>
<dbReference type="PRO" id="PR:O15234"/>
<dbReference type="Proteomes" id="UP000005640">
    <property type="component" value="Chromosome 17"/>
</dbReference>
<dbReference type="RNAct" id="O15234">
    <property type="molecule type" value="protein"/>
</dbReference>
<dbReference type="Bgee" id="ENSG00000108349">
    <property type="expression patterns" value="Expressed in sural nerve and 204 other cell types or tissues"/>
</dbReference>
<dbReference type="ExpressionAtlas" id="O15234">
    <property type="expression patterns" value="baseline and differential"/>
</dbReference>
<dbReference type="GO" id="GO:0010494">
    <property type="term" value="C:cytoplasmic stress granule"/>
    <property type="evidence" value="ECO:0007669"/>
    <property type="project" value="UniProtKB-SubCell"/>
</dbReference>
<dbReference type="GO" id="GO:0005829">
    <property type="term" value="C:cytosol"/>
    <property type="evidence" value="ECO:0000304"/>
    <property type="project" value="Reactome"/>
</dbReference>
<dbReference type="GO" id="GO:0030425">
    <property type="term" value="C:dendrite"/>
    <property type="evidence" value="ECO:0007669"/>
    <property type="project" value="UniProtKB-SubCell"/>
</dbReference>
<dbReference type="GO" id="GO:0035145">
    <property type="term" value="C:exon-exon junction complex"/>
    <property type="evidence" value="ECO:0000314"/>
    <property type="project" value="UniProtKB"/>
</dbReference>
<dbReference type="GO" id="GO:0031965">
    <property type="term" value="C:nuclear membrane"/>
    <property type="evidence" value="ECO:0000314"/>
    <property type="project" value="HPA"/>
</dbReference>
<dbReference type="GO" id="GO:0016607">
    <property type="term" value="C:nuclear speck"/>
    <property type="evidence" value="ECO:0007669"/>
    <property type="project" value="UniProtKB-SubCell"/>
</dbReference>
<dbReference type="GO" id="GO:0005654">
    <property type="term" value="C:nucleoplasm"/>
    <property type="evidence" value="ECO:0000304"/>
    <property type="project" value="Reactome"/>
</dbReference>
<dbReference type="GO" id="GO:0005634">
    <property type="term" value="C:nucleus"/>
    <property type="evidence" value="ECO:0000314"/>
    <property type="project" value="UniProtKB"/>
</dbReference>
<dbReference type="GO" id="GO:0048471">
    <property type="term" value="C:perinuclear region of cytoplasm"/>
    <property type="evidence" value="ECO:0007669"/>
    <property type="project" value="UniProtKB-SubCell"/>
</dbReference>
<dbReference type="GO" id="GO:0071006">
    <property type="term" value="C:U2-type catalytic step 1 spliceosome"/>
    <property type="evidence" value="ECO:0000314"/>
    <property type="project" value="UniProtKB"/>
</dbReference>
<dbReference type="GO" id="GO:0019899">
    <property type="term" value="F:enzyme binding"/>
    <property type="evidence" value="ECO:0000353"/>
    <property type="project" value="UniProtKB"/>
</dbReference>
<dbReference type="GO" id="GO:0042802">
    <property type="term" value="F:identical protein binding"/>
    <property type="evidence" value="ECO:0000314"/>
    <property type="project" value="MGI"/>
</dbReference>
<dbReference type="GO" id="GO:0003729">
    <property type="term" value="F:mRNA binding"/>
    <property type="evidence" value="ECO:0007669"/>
    <property type="project" value="InterPro"/>
</dbReference>
<dbReference type="GO" id="GO:0003723">
    <property type="term" value="F:RNA binding"/>
    <property type="evidence" value="ECO:0007005"/>
    <property type="project" value="UniProtKB"/>
</dbReference>
<dbReference type="GO" id="GO:0031625">
    <property type="term" value="F:ubiquitin protein ligase binding"/>
    <property type="evidence" value="ECO:0000353"/>
    <property type="project" value="UniProtKB"/>
</dbReference>
<dbReference type="GO" id="GO:0008298">
    <property type="term" value="P:intracellular mRNA localization"/>
    <property type="evidence" value="ECO:0007669"/>
    <property type="project" value="Ensembl"/>
</dbReference>
<dbReference type="GO" id="GO:0006406">
    <property type="term" value="P:mRNA export from nucleus"/>
    <property type="evidence" value="ECO:0000303"/>
    <property type="project" value="ComplexPortal"/>
</dbReference>
<dbReference type="GO" id="GO:0000398">
    <property type="term" value="P:mRNA splicing, via spliceosome"/>
    <property type="evidence" value="ECO:0000314"/>
    <property type="project" value="UniProtKB"/>
</dbReference>
<dbReference type="GO" id="GO:0000184">
    <property type="term" value="P:nuclear-transcribed mRNA catabolic process, nonsense-mediated decay"/>
    <property type="evidence" value="ECO:0007669"/>
    <property type="project" value="UniProtKB-KW"/>
</dbReference>
<dbReference type="GO" id="GO:2000622">
    <property type="term" value="P:regulation of nuclear-transcribed mRNA catabolic process, nonsense-mediated decay"/>
    <property type="evidence" value="ECO:0000314"/>
    <property type="project" value="ComplexPortal"/>
</dbReference>
<dbReference type="GO" id="GO:0006417">
    <property type="term" value="P:regulation of translation"/>
    <property type="evidence" value="ECO:0007669"/>
    <property type="project" value="UniProtKB-KW"/>
</dbReference>
<dbReference type="DisProt" id="DP02170"/>
<dbReference type="IDEAL" id="IID00185"/>
<dbReference type="InterPro" id="IPR018545">
    <property type="entry name" value="Btz_dom"/>
</dbReference>
<dbReference type="InterPro" id="IPR028544">
    <property type="entry name" value="CASC3"/>
</dbReference>
<dbReference type="PANTHER" id="PTHR13434">
    <property type="entry name" value="PROTEIN CASC3"/>
    <property type="match status" value="1"/>
</dbReference>
<dbReference type="PANTHER" id="PTHR13434:SF0">
    <property type="entry name" value="PROTEIN CASC3"/>
    <property type="match status" value="1"/>
</dbReference>
<dbReference type="Pfam" id="PF09405">
    <property type="entry name" value="Btz"/>
    <property type="match status" value="1"/>
</dbReference>
<dbReference type="SMART" id="SM01044">
    <property type="entry name" value="Btz"/>
    <property type="match status" value="1"/>
</dbReference>
<accession>O15234</accession>
<accession>A8K8R0</accession>
<reference key="1">
    <citation type="journal article" date="1995" name="Genomics">
        <title>Identification of four novel human genes amplified and overexpressed in breast carcinoma and localized to the q11-q21.3 region of chromosome 17.</title>
        <authorList>
            <person name="Tomasetto C.L."/>
            <person name="Regnier C.H."/>
            <person name="Moog-Lutz C."/>
            <person name="Mattei M.-G."/>
            <person name="Chenard M.-P."/>
            <person name="Lidereau R."/>
            <person name="Basset P."/>
            <person name="Rio M.-C."/>
        </authorList>
    </citation>
    <scope>NUCLEOTIDE SEQUENCE [MRNA]</scope>
    <source>
        <tissue>Mammary carcinoma</tissue>
    </source>
</reference>
<reference key="2">
    <citation type="journal article" date="2002" name="Oncogene">
        <title>Metastatic lymph node 51, a novel nucleo-cytoplasmic protein overexpressed in breast cancer.</title>
        <authorList>
            <person name="Degot S.F."/>
            <person name="Regnier C.H."/>
            <person name="Wendling C."/>
            <person name="Chenard M.-P."/>
            <person name="Rio M.-C."/>
            <person name="Tomasetto C.L."/>
        </authorList>
    </citation>
    <scope>SEQUENCE REVISION</scope>
    <scope>SUBCELLULAR LOCATION</scope>
    <scope>TISSUE SPECIFICITY</scope>
    <scope>PHOSPHORYLATION</scope>
    <source>
        <tissue>Mammary carcinoma</tissue>
    </source>
</reference>
<reference key="3">
    <citation type="journal article" date="2004" name="Nat. Genet.">
        <title>Complete sequencing and characterization of 21,243 full-length human cDNAs.</title>
        <authorList>
            <person name="Ota T."/>
            <person name="Suzuki Y."/>
            <person name="Nishikawa T."/>
            <person name="Otsuki T."/>
            <person name="Sugiyama T."/>
            <person name="Irie R."/>
            <person name="Wakamatsu A."/>
            <person name="Hayashi K."/>
            <person name="Sato H."/>
            <person name="Nagai K."/>
            <person name="Kimura K."/>
            <person name="Makita H."/>
            <person name="Sekine M."/>
            <person name="Obayashi M."/>
            <person name="Nishi T."/>
            <person name="Shibahara T."/>
            <person name="Tanaka T."/>
            <person name="Ishii S."/>
            <person name="Yamamoto J."/>
            <person name="Saito K."/>
            <person name="Kawai Y."/>
            <person name="Isono Y."/>
            <person name="Nakamura Y."/>
            <person name="Nagahari K."/>
            <person name="Murakami K."/>
            <person name="Yasuda T."/>
            <person name="Iwayanagi T."/>
            <person name="Wagatsuma M."/>
            <person name="Shiratori A."/>
            <person name="Sudo H."/>
            <person name="Hosoiri T."/>
            <person name="Kaku Y."/>
            <person name="Kodaira H."/>
            <person name="Kondo H."/>
            <person name="Sugawara M."/>
            <person name="Takahashi M."/>
            <person name="Kanda K."/>
            <person name="Yokoi T."/>
            <person name="Furuya T."/>
            <person name="Kikkawa E."/>
            <person name="Omura Y."/>
            <person name="Abe K."/>
            <person name="Kamihara K."/>
            <person name="Katsuta N."/>
            <person name="Sato K."/>
            <person name="Tanikawa M."/>
            <person name="Yamazaki M."/>
            <person name="Ninomiya K."/>
            <person name="Ishibashi T."/>
            <person name="Yamashita H."/>
            <person name="Murakawa K."/>
            <person name="Fujimori K."/>
            <person name="Tanai H."/>
            <person name="Kimata M."/>
            <person name="Watanabe M."/>
            <person name="Hiraoka S."/>
            <person name="Chiba Y."/>
            <person name="Ishida S."/>
            <person name="Ono Y."/>
            <person name="Takiguchi S."/>
            <person name="Watanabe S."/>
            <person name="Yosida M."/>
            <person name="Hotuta T."/>
            <person name="Kusano J."/>
            <person name="Kanehori K."/>
            <person name="Takahashi-Fujii A."/>
            <person name="Hara H."/>
            <person name="Tanase T.-O."/>
            <person name="Nomura Y."/>
            <person name="Togiya S."/>
            <person name="Komai F."/>
            <person name="Hara R."/>
            <person name="Takeuchi K."/>
            <person name="Arita M."/>
            <person name="Imose N."/>
            <person name="Musashino K."/>
            <person name="Yuuki H."/>
            <person name="Oshima A."/>
            <person name="Sasaki N."/>
            <person name="Aotsuka S."/>
            <person name="Yoshikawa Y."/>
            <person name="Matsunawa H."/>
            <person name="Ichihara T."/>
            <person name="Shiohata N."/>
            <person name="Sano S."/>
            <person name="Moriya S."/>
            <person name="Momiyama H."/>
            <person name="Satoh N."/>
            <person name="Takami S."/>
            <person name="Terashima Y."/>
            <person name="Suzuki O."/>
            <person name="Nakagawa S."/>
            <person name="Senoh A."/>
            <person name="Mizoguchi H."/>
            <person name="Goto Y."/>
            <person name="Shimizu F."/>
            <person name="Wakebe H."/>
            <person name="Hishigaki H."/>
            <person name="Watanabe T."/>
            <person name="Sugiyama A."/>
            <person name="Takemoto M."/>
            <person name="Kawakami B."/>
            <person name="Yamazaki M."/>
            <person name="Watanabe K."/>
            <person name="Kumagai A."/>
            <person name="Itakura S."/>
            <person name="Fukuzumi Y."/>
            <person name="Fujimori Y."/>
            <person name="Komiyama M."/>
            <person name="Tashiro H."/>
            <person name="Tanigami A."/>
            <person name="Fujiwara T."/>
            <person name="Ono T."/>
            <person name="Yamada K."/>
            <person name="Fujii Y."/>
            <person name="Ozaki K."/>
            <person name="Hirao M."/>
            <person name="Ohmori Y."/>
            <person name="Kawabata A."/>
            <person name="Hikiji T."/>
            <person name="Kobatake N."/>
            <person name="Inagaki H."/>
            <person name="Ikema Y."/>
            <person name="Okamoto S."/>
            <person name="Okitani R."/>
            <person name="Kawakami T."/>
            <person name="Noguchi S."/>
            <person name="Itoh T."/>
            <person name="Shigeta K."/>
            <person name="Senba T."/>
            <person name="Matsumura K."/>
            <person name="Nakajima Y."/>
            <person name="Mizuno T."/>
            <person name="Morinaga M."/>
            <person name="Sasaki M."/>
            <person name="Togashi T."/>
            <person name="Oyama M."/>
            <person name="Hata H."/>
            <person name="Watanabe M."/>
            <person name="Komatsu T."/>
            <person name="Mizushima-Sugano J."/>
            <person name="Satoh T."/>
            <person name="Shirai Y."/>
            <person name="Takahashi Y."/>
            <person name="Nakagawa K."/>
            <person name="Okumura K."/>
            <person name="Nagase T."/>
            <person name="Nomura N."/>
            <person name="Kikuchi H."/>
            <person name="Masuho Y."/>
            <person name="Yamashita R."/>
            <person name="Nakai K."/>
            <person name="Yada T."/>
            <person name="Nakamura Y."/>
            <person name="Ohara O."/>
            <person name="Isogai T."/>
            <person name="Sugano S."/>
        </authorList>
    </citation>
    <scope>NUCLEOTIDE SEQUENCE [LARGE SCALE MRNA]</scope>
    <source>
        <tissue>Testis</tissue>
    </source>
</reference>
<reference key="4">
    <citation type="journal article" date="2006" name="Nature">
        <title>DNA sequence of human chromosome 17 and analysis of rearrangement in the human lineage.</title>
        <authorList>
            <person name="Zody M.C."/>
            <person name="Garber M."/>
            <person name="Adams D.J."/>
            <person name="Sharpe T."/>
            <person name="Harrow J."/>
            <person name="Lupski J.R."/>
            <person name="Nicholson C."/>
            <person name="Searle S.M."/>
            <person name="Wilming L."/>
            <person name="Young S.K."/>
            <person name="Abouelleil A."/>
            <person name="Allen N.R."/>
            <person name="Bi W."/>
            <person name="Bloom T."/>
            <person name="Borowsky M.L."/>
            <person name="Bugalter B.E."/>
            <person name="Butler J."/>
            <person name="Chang J.L."/>
            <person name="Chen C.-K."/>
            <person name="Cook A."/>
            <person name="Corum B."/>
            <person name="Cuomo C.A."/>
            <person name="de Jong P.J."/>
            <person name="DeCaprio D."/>
            <person name="Dewar K."/>
            <person name="FitzGerald M."/>
            <person name="Gilbert J."/>
            <person name="Gibson R."/>
            <person name="Gnerre S."/>
            <person name="Goldstein S."/>
            <person name="Grafham D.V."/>
            <person name="Grocock R."/>
            <person name="Hafez N."/>
            <person name="Hagopian D.S."/>
            <person name="Hart E."/>
            <person name="Norman C.H."/>
            <person name="Humphray S."/>
            <person name="Jaffe D.B."/>
            <person name="Jones M."/>
            <person name="Kamal M."/>
            <person name="Khodiyar V.K."/>
            <person name="LaButti K."/>
            <person name="Laird G."/>
            <person name="Lehoczky J."/>
            <person name="Liu X."/>
            <person name="Lokyitsang T."/>
            <person name="Loveland J."/>
            <person name="Lui A."/>
            <person name="Macdonald P."/>
            <person name="Major J.E."/>
            <person name="Matthews L."/>
            <person name="Mauceli E."/>
            <person name="McCarroll S.A."/>
            <person name="Mihalev A.H."/>
            <person name="Mudge J."/>
            <person name="Nguyen C."/>
            <person name="Nicol R."/>
            <person name="O'Leary S.B."/>
            <person name="Osoegawa K."/>
            <person name="Schwartz D.C."/>
            <person name="Shaw-Smith C."/>
            <person name="Stankiewicz P."/>
            <person name="Steward C."/>
            <person name="Swarbreck D."/>
            <person name="Venkataraman V."/>
            <person name="Whittaker C.A."/>
            <person name="Yang X."/>
            <person name="Zimmer A.R."/>
            <person name="Bradley A."/>
            <person name="Hubbard T."/>
            <person name="Birren B.W."/>
            <person name="Rogers J."/>
            <person name="Lander E.S."/>
            <person name="Nusbaum C."/>
        </authorList>
    </citation>
    <scope>NUCLEOTIDE SEQUENCE [LARGE SCALE GENOMIC DNA]</scope>
</reference>
<reference key="5">
    <citation type="journal article" date="2004" name="Genome Res.">
        <title>The status, quality, and expansion of the NIH full-length cDNA project: the Mammalian Gene Collection (MGC).</title>
        <authorList>
            <consortium name="The MGC Project Team"/>
        </authorList>
    </citation>
    <scope>NUCLEOTIDE SEQUENCE [LARGE SCALE MRNA]</scope>
    <source>
        <tissue>Duodenum</tissue>
        <tissue>Skin</tissue>
    </source>
</reference>
<reference key="6">
    <citation type="journal article" date="2002" name="Cancer Res.">
        <title>Targets of gene amplification and overexpression at 17q in gastric cancer.</title>
        <authorList>
            <person name="Varis A."/>
            <person name="Wolf M."/>
            <person name="Monni O."/>
            <person name="Vakkari M.-L."/>
            <person name="Kokkola A."/>
            <person name="Moskaluk C."/>
            <person name="Frierson H.F. Jr."/>
            <person name="Powell S.M."/>
            <person name="Knuutila S."/>
            <person name="Kallioniemi A."/>
            <person name="El-Rifai W."/>
        </authorList>
    </citation>
    <scope>OVEREXPRESSION IN GASTRIC CANCERS</scope>
</reference>
<reference key="7">
    <citation type="journal article" date="2004" name="J. Biol. Chem.">
        <title>Association of the breast cancer protein MLN51 with the exon junction complex via its speckle localizer and RNA binding module.</title>
        <authorList>
            <person name="Degot S."/>
            <person name="Le Hir H."/>
            <person name="Alpy F."/>
            <person name="Kedinger V."/>
            <person name="Stoll I."/>
            <person name="Wendling C."/>
            <person name="Seraphin B."/>
            <person name="Rio M.-C."/>
            <person name="Tomasetto C."/>
        </authorList>
    </citation>
    <scope>INTERACTION WITH MAGOH; NXF1 AND RBM8A</scope>
    <scope>RNA-BINDING</scope>
    <scope>SUBCELLULAR LOCATION</scope>
</reference>
<reference key="8">
    <citation type="journal article" date="2005" name="Nat. Struct. Mol. Biol.">
        <title>The exon junction core complex is locked onto RNA by inhibition of eIF4AIII ATPase activity.</title>
        <authorList>
            <person name="Ballut L."/>
            <person name="Marchadier B."/>
            <person name="Baguet A."/>
            <person name="Tomasetto C."/>
            <person name="Seraphin B."/>
            <person name="Le Hir H."/>
        </authorList>
    </citation>
    <scope>IDENTIFICATION IN THE CORE EXON JUNCTION COMPLEX</scope>
    <scope>INTERACTION WITH EIF4A3</scope>
    <scope>MUTAGENESIS OF TYR-181; 184-ARG-LYS-185; PHE-188; TRP-218; 220-HIS-ASP-221 AND 240-TYR-GLY-241</scope>
    <scope>SUBCELLULAR LOCATION</scope>
    <scope>RNA-BINDING</scope>
</reference>
<reference key="9">
    <citation type="journal article" date="2005" name="RNA">
        <title>Biochemical analysis of the EJC reveals two new factors and a stable tetrameric protein core.</title>
        <authorList>
            <person name="Tange T.O."/>
            <person name="Shibuya T."/>
            <person name="Jurica M.S."/>
            <person name="Moore M.J."/>
        </authorList>
    </citation>
    <scope>IDENTIFICATION IN THE CORE EXON JUNCTION COMPLEX</scope>
    <scope>IDENTIFICATION IN A MRNA SPLICING-DEPENDENT EXON JUNCTION COMPLEX</scope>
    <scope>IDENTIFICATION BY MASS SPECTROMETRY</scope>
</reference>
<reference key="10">
    <citation type="journal article" date="2006" name="Cell">
        <title>Global, in vivo, and site-specific phosphorylation dynamics in signaling networks.</title>
        <authorList>
            <person name="Olsen J.V."/>
            <person name="Blagoev B."/>
            <person name="Gnad F."/>
            <person name="Macek B."/>
            <person name="Kumar C."/>
            <person name="Mortensen P."/>
            <person name="Mann M."/>
        </authorList>
    </citation>
    <scope>PHOSPHORYLATION [LARGE SCALE ANALYSIS] AT SER-363 AND SER-373</scope>
    <scope>IDENTIFICATION BY MASS SPECTROMETRY [LARGE SCALE ANALYSIS]</scope>
    <source>
        <tissue>Cervix carcinoma</tissue>
    </source>
</reference>
<reference key="11">
    <citation type="journal article" date="2007" name="J. Cell Sci.">
        <title>The exon-junction-complex-component metastatic lymph node 51 functions in stress-granule assembly.</title>
        <authorList>
            <person name="Baguet A."/>
            <person name="Degot S."/>
            <person name="Cougot N."/>
            <person name="Bertrand E."/>
            <person name="Chenard M.P."/>
            <person name="Wendling C."/>
            <person name="Kessler P."/>
            <person name="Le Hir H."/>
            <person name="Rio M.C."/>
            <person name="Tomasetto C."/>
        </authorList>
    </citation>
    <scope>FUNCTION IN STRESS RESPONSE</scope>
    <scope>SUBCELLULAR LOCATION</scope>
</reference>
<reference key="12">
    <citation type="journal article" date="2007" name="PLoS ONE">
        <title>MLN51 stimulates the RNA-helicase activity of eIF4AIII.</title>
        <authorList>
            <person name="Noble C.G."/>
            <person name="Song H."/>
        </authorList>
    </citation>
    <scope>FUNCTION IN EIF4A3 ATPASE AND RNA-HELICASE ACTIVITY</scope>
</reference>
<reference key="13">
    <citation type="journal article" date="2008" name="Proc. Natl. Acad. Sci. U.S.A.">
        <title>A quantitative atlas of mitotic phosphorylation.</title>
        <authorList>
            <person name="Dephoure N."/>
            <person name="Zhou C."/>
            <person name="Villen J."/>
            <person name="Beausoleil S.A."/>
            <person name="Bakalarski C.E."/>
            <person name="Elledge S.J."/>
            <person name="Gygi S.P."/>
        </authorList>
    </citation>
    <scope>PHOSPHORYLATION [LARGE SCALE ANALYSIS] AT SER-148 AND SER-477</scope>
    <scope>IDENTIFICATION BY MASS SPECTROMETRY [LARGE SCALE ANALYSIS]</scope>
    <source>
        <tissue>Cervix carcinoma</tissue>
    </source>
</reference>
<reference key="14">
    <citation type="journal article" date="2009" name="Anal. Chem.">
        <title>Lys-N and trypsin cover complementary parts of the phosphoproteome in a refined SCX-based approach.</title>
        <authorList>
            <person name="Gauci S."/>
            <person name="Helbig A.O."/>
            <person name="Slijper M."/>
            <person name="Krijgsveld J."/>
            <person name="Heck A.J."/>
            <person name="Mohammed S."/>
        </authorList>
    </citation>
    <scope>IDENTIFICATION BY MASS SPECTROMETRY [LARGE SCALE ANALYSIS]</scope>
</reference>
<reference key="15">
    <citation type="journal article" date="2009" name="Mol. Cell. Proteomics">
        <title>Large-scale proteomics analysis of the human kinome.</title>
        <authorList>
            <person name="Oppermann F.S."/>
            <person name="Gnad F."/>
            <person name="Olsen J.V."/>
            <person name="Hornberger R."/>
            <person name="Greff Z."/>
            <person name="Keri G."/>
            <person name="Mann M."/>
            <person name="Daub H."/>
        </authorList>
    </citation>
    <scope>PHOSPHORYLATION [LARGE SCALE ANALYSIS] AT SER-148</scope>
    <scope>IDENTIFICATION BY MASS SPECTROMETRY [LARGE SCALE ANALYSIS]</scope>
</reference>
<reference key="16">
    <citation type="journal article" date="2009" name="Sci. Signal.">
        <title>Quantitative phosphoproteomic analysis of T cell receptor signaling reveals system-wide modulation of protein-protein interactions.</title>
        <authorList>
            <person name="Mayya V."/>
            <person name="Lundgren D.H."/>
            <person name="Hwang S.-I."/>
            <person name="Rezaul K."/>
            <person name="Wu L."/>
            <person name="Eng J.K."/>
            <person name="Rodionov V."/>
            <person name="Han D.K."/>
        </authorList>
    </citation>
    <scope>IDENTIFICATION BY MASS SPECTROMETRY [LARGE SCALE ANALYSIS]</scope>
    <source>
        <tissue>Leukemic T-cell</tissue>
    </source>
</reference>
<reference key="17">
    <citation type="journal article" date="2011" name="BMC Syst. Biol.">
        <title>Initial characterization of the human central proteome.</title>
        <authorList>
            <person name="Burkard T.R."/>
            <person name="Planyavsky M."/>
            <person name="Kaupe I."/>
            <person name="Breitwieser F.P."/>
            <person name="Buerckstuemmer T."/>
            <person name="Bennett K.L."/>
            <person name="Superti-Furga G."/>
            <person name="Colinge J."/>
        </authorList>
    </citation>
    <scope>IDENTIFICATION BY MASS SPECTROMETRY [LARGE SCALE ANALYSIS]</scope>
</reference>
<reference key="18">
    <citation type="journal article" date="2011" name="Nat. Cell Biol.">
        <title>RNF146 is a poly(ADP-ribose)-directed E3 ligase that regulates axin degradation and Wnt signalling.</title>
        <authorList>
            <person name="Zhang Y."/>
            <person name="Liu S."/>
            <person name="Mickanin C."/>
            <person name="Feng Y."/>
            <person name="Charlat O."/>
            <person name="Michaud G.A."/>
            <person name="Schirle M."/>
            <person name="Shi X."/>
            <person name="Hild M."/>
            <person name="Bauer A."/>
            <person name="Myer V.E."/>
            <person name="Finan P.M."/>
            <person name="Porter J.A."/>
            <person name="Huang S.M."/>
            <person name="Cong F."/>
        </authorList>
    </citation>
    <scope>ADP-RIBOSYLATION</scope>
    <scope>UBIQUITINATION</scope>
</reference>
<reference key="19">
    <citation type="journal article" date="2011" name="Sci. Signal.">
        <title>System-wide temporal characterization of the proteome and phosphoproteome of human embryonic stem cell differentiation.</title>
        <authorList>
            <person name="Rigbolt K.T."/>
            <person name="Prokhorova T.A."/>
            <person name="Akimov V."/>
            <person name="Henningsen J."/>
            <person name="Johansen P.T."/>
            <person name="Kratchmarova I."/>
            <person name="Kassem M."/>
            <person name="Mann M."/>
            <person name="Olsen J.V."/>
            <person name="Blagoev B."/>
        </authorList>
    </citation>
    <scope>PHOSPHORYLATION [LARGE SCALE ANALYSIS] AT SER-117; SER-148; SER-265; SER-363 AND SER-373</scope>
    <scope>IDENTIFICATION BY MASS SPECTROMETRY [LARGE SCALE ANALYSIS]</scope>
</reference>
<reference key="20">
    <citation type="journal article" date="2013" name="J. Proteome Res.">
        <title>Toward a comprehensive characterization of a human cancer cell phosphoproteome.</title>
        <authorList>
            <person name="Zhou H."/>
            <person name="Di Palma S."/>
            <person name="Preisinger C."/>
            <person name="Peng M."/>
            <person name="Polat A.N."/>
            <person name="Heck A.J."/>
            <person name="Mohammed S."/>
        </authorList>
    </citation>
    <scope>PHOSPHORYLATION [LARGE SCALE ANALYSIS] AT SER-117; SER-148; SER-265 AND SER-363</scope>
    <scope>IDENTIFICATION BY MASS SPECTROMETRY [LARGE SCALE ANALYSIS]</scope>
    <source>
        <tissue>Cervix carcinoma</tissue>
        <tissue>Erythroleukemia</tissue>
    </source>
</reference>
<reference key="21">
    <citation type="journal article" date="2014" name="Cell Rep.">
        <title>The RNA helicase DHX34 activates NMD by promoting a transition from the surveillance to the decay-inducing complex.</title>
        <authorList>
            <person name="Hug N."/>
            <person name="Caceres J.F."/>
        </authorList>
    </citation>
    <scope>INTERACTION WITH DHX34</scope>
</reference>
<reference key="22">
    <citation type="journal article" date="2014" name="J. Proteomics">
        <title>An enzyme assisted RP-RPLC approach for in-depth analysis of human liver phosphoproteome.</title>
        <authorList>
            <person name="Bian Y."/>
            <person name="Song C."/>
            <person name="Cheng K."/>
            <person name="Dong M."/>
            <person name="Wang F."/>
            <person name="Huang J."/>
            <person name="Sun D."/>
            <person name="Wang L."/>
            <person name="Ye M."/>
            <person name="Zou H."/>
        </authorList>
    </citation>
    <scope>PHOSPHORYLATION [LARGE SCALE ANALYSIS] AT SER-117; SER-148 AND THR-357</scope>
    <scope>IDENTIFICATION BY MASS SPECTROMETRY [LARGE SCALE ANALYSIS]</scope>
    <source>
        <tissue>Liver</tissue>
    </source>
</reference>
<reference key="23">
    <citation type="journal article" date="2006" name="Cell">
        <title>The crystal structure of the exon junction complex reveals how it maintains a stable grip on mRNA.</title>
        <authorList>
            <person name="Bono F."/>
            <person name="Ebert J."/>
            <person name="Lorentzen E."/>
            <person name="Conti E."/>
        </authorList>
    </citation>
    <scope>X-RAY CRYSTALLOGRAPHY (2.21 ANGSTROMS) OF 137-286 IN THE EJC COMPLEX WITH EIF4A3; MAGOH; RBM8A AND AMP-PNP</scope>
</reference>
<reference key="24">
    <citation type="journal article" date="2006" name="Science">
        <title>Structure of the exon junction core complex with a trapped DEAD-box ATPase bound to RNA.</title>
        <authorList>
            <person name="Andersen C.B."/>
            <person name="Ballut L."/>
            <person name="Johansen J.S."/>
            <person name="Chamieh H."/>
            <person name="Nielsen K.H."/>
            <person name="Oliveira C.L."/>
            <person name="Pedersen J.S."/>
            <person name="Seraphin B."/>
            <person name="Le Hir H."/>
            <person name="Andersen G.R."/>
        </authorList>
    </citation>
    <scope>X-RAY CRYSTALLOGRAPHY (2.3 ANGSTROMS) OF 170-246 IN THE EJC COMPLEX WITH EIF4A3; MAGOH; RBM8A AND ADP-NP</scope>
</reference>
<reference key="25">
    <citation type="journal article" date="2009" name="RNA">
        <title>Mechanism of ATP turnover inhibition in the EJC.</title>
        <authorList>
            <person name="Nielsen K.H."/>
            <person name="Chamieh H."/>
            <person name="Andersen C.B."/>
            <person name="Fredslund F."/>
            <person name="Hamborg K."/>
            <person name="Le Hir H."/>
            <person name="Andersen G.R."/>
        </authorList>
    </citation>
    <scope>X-RAY CRYSTALLOGRAPHY (2.3 ANGSTROMS) OF 138-283 IN THE EJC COMPLEX WITH EIF4A3; MAGOH; RBM8A AND TRANSITION STATE ANALOG ADP-ALF3</scope>
</reference>
<reference evidence="21" key="26">
    <citation type="journal article" date="2010" name="Proc. Natl. Acad. Sci. U.S.A.">
        <title>Insights into the recruitment of the NMD machinery from the crystal structure of a core EJC-UPF3b complex.</title>
        <authorList>
            <person name="Buchwald G."/>
            <person name="Ebert J."/>
            <person name="Basquin C."/>
            <person name="Sauliere J."/>
            <person name="Jayachandran U."/>
            <person name="Bono F."/>
            <person name="Le Hir H."/>
            <person name="Conti E."/>
        </authorList>
    </citation>
    <scope>X-RAY CRYSTALLOGRAPHY (3.40 ANGSTROMS) OF 137-286 IN THE EJC COMPLEX WITH EIF4A3; MAGOH; RBM8A; UPF3B; UPF2 AND RNA</scope>
    <scope>IDENTIFICATION IN THE EJC COMPLEX WITH UPF3A</scope>
</reference>
<reference evidence="22" key="27">
    <citation type="journal article" date="2017" name="Cell">
        <title>An Atomic Structure of the Human Spliceosome.</title>
        <authorList>
            <person name="Zhang X."/>
            <person name="Yan C."/>
            <person name="Hang J."/>
            <person name="Finci L.I."/>
            <person name="Lei J."/>
            <person name="Shi Y."/>
        </authorList>
    </citation>
    <scope>STRUCTURE BY ELECTRON MICROSCOPY (3.60 ANGSTROMS)</scope>
    <scope>FUNCTION</scope>
    <scope>SUBCELLULAR LOCATION</scope>
    <scope>SUBUNIT</scope>
</reference>
<reference evidence="23" key="28">
    <citation type="journal article" date="2018" name="Science">
        <title>Structure of a human catalytic step I spliceosome.</title>
        <authorList>
            <person name="Zhan X."/>
            <person name="Yan C."/>
            <person name="Zhang X."/>
            <person name="Lei J."/>
            <person name="Shi Y."/>
        </authorList>
    </citation>
    <scope>STRUCTURE BY ELECTRON MICROSCOPY (4.10 ANGSTROMS)</scope>
    <scope>FUNCTION</scope>
    <scope>SUBCELLULAR LOCATION</scope>
    <scope>SUBUNIT</scope>
</reference>
<proteinExistence type="evidence at protein level"/>
<protein>
    <recommendedName>
        <fullName>Protein CASC3</fullName>
    </recommendedName>
    <alternativeName>
        <fullName>Cancer susceptibility candidate gene 3 protein</fullName>
    </alternativeName>
    <alternativeName>
        <fullName evidence="19">Metastatic lymph node gene 51 protein</fullName>
        <shortName>MLN 51</shortName>
    </alternativeName>
    <alternativeName>
        <fullName>Protein barentsz</fullName>
        <shortName>Btz</shortName>
    </alternativeName>
</protein>
<feature type="chain" id="PRO_0000089324" description="Protein CASC3">
    <location>
        <begin position="1"/>
        <end position="703"/>
    </location>
</feature>
<feature type="region of interest" description="Disordered" evidence="4">
    <location>
        <begin position="1"/>
        <end position="462"/>
    </location>
</feature>
<feature type="region of interest" description="Necessary for RNA-binding, interaction with MAGOH and localization in nucleus speckles" evidence="6">
    <location>
        <begin position="137"/>
        <end position="283"/>
    </location>
</feature>
<feature type="region of interest" description="Sufficient to form the EJC">
    <location>
        <begin position="137"/>
        <end position="283"/>
    </location>
</feature>
<feature type="region of interest" description="Necessary for localization in cytoplasmic stress granules">
    <location>
        <begin position="377"/>
        <end position="703"/>
    </location>
</feature>
<feature type="region of interest" description="Disordered" evidence="4">
    <location>
        <begin position="492"/>
        <end position="538"/>
    </location>
</feature>
<feature type="region of interest" description="Disordered" evidence="4">
    <location>
        <begin position="633"/>
        <end position="703"/>
    </location>
</feature>
<feature type="coiled-coil region" evidence="3">
    <location>
        <begin position="95"/>
        <end position="131"/>
    </location>
</feature>
<feature type="short sequence motif" description="Nuclear localization signal 1" evidence="3">
    <location>
        <begin position="204"/>
        <end position="210"/>
    </location>
</feature>
<feature type="short sequence motif" description="Nuclear localization signal 2" evidence="3">
    <location>
        <begin position="254"/>
        <end position="262"/>
    </location>
</feature>
<feature type="short sequence motif" description="Nuclear export signal">
    <location>
        <begin position="462"/>
        <end position="466"/>
    </location>
</feature>
<feature type="compositionally biased region" description="Low complexity" evidence="4">
    <location>
        <begin position="19"/>
        <end position="28"/>
    </location>
</feature>
<feature type="compositionally biased region" description="Gly residues" evidence="4">
    <location>
        <begin position="29"/>
        <end position="46"/>
    </location>
</feature>
<feature type="compositionally biased region" description="Acidic residues" evidence="4">
    <location>
        <begin position="74"/>
        <end position="84"/>
    </location>
</feature>
<feature type="compositionally biased region" description="Acidic residues" evidence="4">
    <location>
        <begin position="93"/>
        <end position="108"/>
    </location>
</feature>
<feature type="compositionally biased region" description="Basic and acidic residues" evidence="4">
    <location>
        <begin position="109"/>
        <end position="119"/>
    </location>
</feature>
<feature type="compositionally biased region" description="Basic and acidic residues" evidence="4">
    <location>
        <begin position="127"/>
        <end position="138"/>
    </location>
</feature>
<feature type="compositionally biased region" description="Polar residues" evidence="4">
    <location>
        <begin position="139"/>
        <end position="157"/>
    </location>
</feature>
<feature type="compositionally biased region" description="Basic and acidic residues" evidence="4">
    <location>
        <begin position="158"/>
        <end position="178"/>
    </location>
</feature>
<feature type="compositionally biased region" description="Basic and acidic residues" evidence="4">
    <location>
        <begin position="211"/>
        <end position="234"/>
    </location>
</feature>
<feature type="compositionally biased region" description="Basic and acidic residues" evidence="4">
    <location>
        <begin position="245"/>
        <end position="255"/>
    </location>
</feature>
<feature type="compositionally biased region" description="Basic and acidic residues" evidence="4">
    <location>
        <begin position="341"/>
        <end position="355"/>
    </location>
</feature>
<feature type="compositionally biased region" description="Basic and acidic residues" evidence="4">
    <location>
        <begin position="413"/>
        <end position="422"/>
    </location>
</feature>
<feature type="compositionally biased region" description="Pro residues" evidence="4">
    <location>
        <begin position="424"/>
        <end position="445"/>
    </location>
</feature>
<feature type="compositionally biased region" description="Pro residues" evidence="4">
    <location>
        <begin position="641"/>
        <end position="650"/>
    </location>
</feature>
<feature type="compositionally biased region" description="Pro residues" evidence="4">
    <location>
        <begin position="677"/>
        <end position="696"/>
    </location>
</feature>
<feature type="modified residue" description="Phosphoserine" evidence="1">
    <location>
        <position position="35"/>
    </location>
</feature>
<feature type="modified residue" description="Phosphoserine" evidence="27 28 29">
    <location>
        <position position="117"/>
    </location>
</feature>
<feature type="modified residue" description="Phosphoserine" evidence="25 26 27 28 29">
    <location>
        <position position="148"/>
    </location>
</feature>
<feature type="modified residue" description="Phosphoserine" evidence="27 28">
    <location>
        <position position="265"/>
    </location>
</feature>
<feature type="modified residue" description="Phosphothreonine" evidence="29">
    <location>
        <position position="357"/>
    </location>
</feature>
<feature type="modified residue" description="Phosphoserine" evidence="24 27 28">
    <location>
        <position position="363"/>
    </location>
</feature>
<feature type="modified residue" description="Phosphoserine" evidence="24 27">
    <location>
        <position position="373"/>
    </location>
</feature>
<feature type="modified residue" description="Phosphoserine" evidence="25">
    <location>
        <position position="477"/>
    </location>
</feature>
<feature type="mutagenesis site" description="Does not affect EJC formation." evidence="7">
    <original>Y</original>
    <variation>A</variation>
    <location>
        <position position="181"/>
    </location>
</feature>
<feature type="mutagenesis site" description="Does not affect EJC formation." evidence="7">
    <original>RK</original>
    <variation>AA</variation>
    <location>
        <begin position="184"/>
        <end position="185"/>
    </location>
</feature>
<feature type="mutagenesis site" description="Does not affect EJC formation." evidence="7">
    <original>F</original>
    <variation>A</variation>
    <location>
        <position position="188"/>
    </location>
</feature>
<feature type="mutagenesis site" description="Abolishes interaction with EIF4A3, EJC formation and localization in nucleus speckles." evidence="7">
    <original>W</original>
    <variation>A</variation>
    <location>
        <position position="218"/>
    </location>
</feature>
<feature type="mutagenesis site" description="Abolishes interaction with EIF4A3, EJC formation and localization in nucleus speckles." evidence="7">
    <original>HD</original>
    <variation>AA</variation>
    <location>
        <begin position="220"/>
        <end position="221"/>
    </location>
</feature>
<feature type="mutagenesis site" description="Abolishes interaction with EIF4A3, EJC formation and localization in nucleus speckles." evidence="7">
    <original>YG</original>
    <variation>AA</variation>
    <location>
        <begin position="240"/>
        <end position="241"/>
    </location>
</feature>
<feature type="helix" evidence="31">
    <location>
        <begin position="172"/>
        <end position="174"/>
    </location>
</feature>
<feature type="helix" evidence="31">
    <location>
        <begin position="226"/>
        <end position="228"/>
    </location>
</feature>
<feature type="helix" evidence="30">
    <location>
        <begin position="233"/>
        <end position="240"/>
    </location>
</feature>
<feature type="turn" evidence="32">
    <location>
        <begin position="244"/>
        <end position="246"/>
    </location>
</feature>
<keyword id="KW-0002">3D-structure</keyword>
<keyword id="KW-0013">ADP-ribosylation</keyword>
<keyword id="KW-0966">Cell projection</keyword>
<keyword id="KW-0175">Coiled coil</keyword>
<keyword id="KW-0963">Cytoplasm</keyword>
<keyword id="KW-0507">mRNA processing</keyword>
<keyword id="KW-0508">mRNA splicing</keyword>
<keyword id="KW-0509">mRNA transport</keyword>
<keyword id="KW-0866">Nonsense-mediated mRNA decay</keyword>
<keyword id="KW-0539">Nucleus</keyword>
<keyword id="KW-0597">Phosphoprotein</keyword>
<keyword id="KW-1267">Proteomics identification</keyword>
<keyword id="KW-1185">Reference proteome</keyword>
<keyword id="KW-0694">RNA-binding</keyword>
<keyword id="KW-0747">Spliceosome</keyword>
<keyword id="KW-0346">Stress response</keyword>
<keyword id="KW-0810">Translation regulation</keyword>
<keyword id="KW-0813">Transport</keyword>
<keyword id="KW-0832">Ubl conjugation</keyword>
<organism>
    <name type="scientific">Homo sapiens</name>
    <name type="common">Human</name>
    <dbReference type="NCBI Taxonomy" id="9606"/>
    <lineage>
        <taxon>Eukaryota</taxon>
        <taxon>Metazoa</taxon>
        <taxon>Chordata</taxon>
        <taxon>Craniata</taxon>
        <taxon>Vertebrata</taxon>
        <taxon>Euteleostomi</taxon>
        <taxon>Mammalia</taxon>
        <taxon>Eutheria</taxon>
        <taxon>Euarchontoglires</taxon>
        <taxon>Primates</taxon>
        <taxon>Haplorrhini</taxon>
        <taxon>Catarrhini</taxon>
        <taxon>Hominidae</taxon>
        <taxon>Homo</taxon>
    </lineage>
</organism>
<comment type="function">
    <text evidence="11 12 17 18">Required for pre-mRNA splicing as component of the spliceosome (PubMed:28502770, PubMed:29301961). Core component of the splicing-dependent multiprotein exon junction complex (EJC) deposited at splice junctions on mRNAs. The EJC is a dynamic structure consisting of core proteins and several peripheral nuclear and cytoplasmic associated factors that join the complex only transiently either during EJC assembly or during subsequent mRNA metabolism. The EJC marks the position of the exon-exon junction in the mature mRNA for the gene expression machinery and the core components remain bound to spliced mRNAs throughout all stages of mRNA metabolism thereby influencing downstream processes including nuclear mRNA export, subcellular mRNA localization, translation efficiency and nonsense-mediated mRNA decay (NMD). Stimulates the ATPase and RNA-helicase activities of EIF4A3. Plays a role in the stress response by participating in cytoplasmic stress granules assembly and by favoring cell recovery following stress. Component of the dendritic ribonucleoprotein particles (RNPs) in hippocampal neurons. May play a role in mRNA transport. Binds spliced mRNA in sequence-independent manner, 20-24 nucleotides upstream of mRNA exon-exon junctions. Binds poly(G) and poly(U) RNA homomer.</text>
</comment>
<comment type="subunit">
    <text evidence="2 6 7 8 9 10 13 14 16 17 18">Identified in the spliceosome C complex (PubMed:28502770, PubMed:29301961). Component of the mRNA splicing-dependent exon junction complex (EJC), which contains at least CASC3, EIF4A3, MAGOH, NXF1 and RBM8A/Y14 (PubMed:15166247, PubMed:16170325, PubMed:16314458, PubMed:16923391, PubMed:16931718, PubMed:19033377, PubMed:20479275). Identified in a complex composed of the EJC core, UPF3B and UPF2. The EJC core can also interact with UPF3A (in vitro) (PubMed:20479275). Forms homooligomers (By similarity). Interacts with STAU in an RNA-dependent manner (By similarity). Interacts with DHX34; the interaction is RNA-independent (PubMed:25220460).</text>
</comment>
<comment type="interaction">
    <interactant intactId="EBI-299118">
        <id>O15234</id>
    </interactant>
    <interactant intactId="EBI-299104">
        <id>P38919</id>
        <label>EIF4A3</label>
    </interactant>
    <organismsDiffer>false</organismsDiffer>
    <experiments>37</experiments>
</comment>
<comment type="interaction">
    <interactant intactId="EBI-299118">
        <id>O15234</id>
    </interactant>
    <interactant intactId="EBI-11962084">
        <id>Q3LI66</id>
        <label>KRTAP6-2</label>
    </interactant>
    <organismsDiffer>false</organismsDiffer>
    <experiments>5</experiments>
</comment>
<comment type="interaction">
    <interactant intactId="EBI-299118">
        <id>O15234</id>
    </interactant>
    <interactant intactId="EBI-299134">
        <id>P61326</id>
        <label>MAGOH</label>
    </interactant>
    <organismsDiffer>false</organismsDiffer>
    <experiments>27</experiments>
</comment>
<comment type="subcellular location">
    <subcellularLocation>
        <location evidence="5">Cytoplasm</location>
    </subcellularLocation>
    <subcellularLocation>
        <location evidence="1">Cytoplasm</location>
        <location evidence="1">Perinuclear region</location>
    </subcellularLocation>
    <subcellularLocation>
        <location evidence="5 17 18">Nucleus</location>
    </subcellularLocation>
    <subcellularLocation>
        <location evidence="7">Nucleus speckle</location>
    </subcellularLocation>
    <subcellularLocation>
        <location evidence="12">Cytoplasm</location>
        <location evidence="12">Stress granule</location>
    </subcellularLocation>
    <subcellularLocation>
        <location evidence="2">Cytoplasm</location>
        <location evidence="2">Cytoplasmic ribonucleoprotein granule</location>
    </subcellularLocation>
    <subcellularLocation>
        <location evidence="2">Cell projection</location>
        <location evidence="2">Dendrite</location>
    </subcellularLocation>
    <text evidence="2 6 12">Shuttles between the nucleus and the cytoplasm in a XPO1/CRM1-dependent manner. Transported to the cytoplasm as part of the exon junction complex (EJC) bound to mRNA (PubMed:15166247). In nuclear speckles, colocalizes with MAGOH. Under stress conditions, colocalizes with FMR1 and TIA1, but not MAGOH and RBM8A EJC core factors, in cytoplasmic stress granules (PubMed:17652158). In the dendrites of hippocampal neurons, localizes to dendritic ribonucleoprotein granules (By similarity).</text>
</comment>
<comment type="tissue specificity">
    <text evidence="5">Widely expressed. Overexpressed in breast cancers and metastasis, as well as in gastric cancers.</text>
</comment>
<comment type="domain">
    <text>The coiled coil domain may be involved in oligomerization.</text>
</comment>
<comment type="PTM">
    <text evidence="15">ADP-ribosylated by tankyrase TNKS and TNKS2. Poly-ADP-ribosylated protein is recognized by RNF146, followed by ubiquitination.</text>
</comment>
<comment type="PTM">
    <text evidence="15">Ubiquitinated by RNF146 when poly-ADP-ribosylated, leading to its degradation.</text>
</comment>
<comment type="similarity">
    <text evidence="20">Belongs to the CASC3 family.</text>
</comment>
<comment type="online information" name="Atlas of Genetics and Cytogenetics in Oncology and Haematology">
    <link uri="https://atlasgeneticsoncology.org/gene/241/MLN51"/>
</comment>
<name>CASC3_HUMAN</name>
<evidence type="ECO:0000250" key="1">
    <source>
        <dbReference type="UniProtKB" id="Q8K3W3"/>
    </source>
</evidence>
<evidence type="ECO:0000250" key="2">
    <source>
        <dbReference type="UniProtKB" id="Q8K3X0"/>
    </source>
</evidence>
<evidence type="ECO:0000255" key="3"/>
<evidence type="ECO:0000256" key="4">
    <source>
        <dbReference type="SAM" id="MobiDB-lite"/>
    </source>
</evidence>
<evidence type="ECO:0000269" key="5">
    <source>
    </source>
</evidence>
<evidence type="ECO:0000269" key="6">
    <source>
    </source>
</evidence>
<evidence type="ECO:0000269" key="7">
    <source>
    </source>
</evidence>
<evidence type="ECO:0000269" key="8">
    <source>
    </source>
</evidence>
<evidence type="ECO:0000269" key="9">
    <source>
    </source>
</evidence>
<evidence type="ECO:0000269" key="10">
    <source>
    </source>
</evidence>
<evidence type="ECO:0000269" key="11">
    <source>
    </source>
</evidence>
<evidence type="ECO:0000269" key="12">
    <source>
    </source>
</evidence>
<evidence type="ECO:0000269" key="13">
    <source>
    </source>
</evidence>
<evidence type="ECO:0000269" key="14">
    <source>
    </source>
</evidence>
<evidence type="ECO:0000269" key="15">
    <source>
    </source>
</evidence>
<evidence type="ECO:0000269" key="16">
    <source>
    </source>
</evidence>
<evidence type="ECO:0000269" key="17">
    <source>
    </source>
</evidence>
<evidence type="ECO:0000269" key="18">
    <source>
    </source>
</evidence>
<evidence type="ECO:0000303" key="19">
    <source>
    </source>
</evidence>
<evidence type="ECO:0000305" key="20"/>
<evidence type="ECO:0007744" key="21">
    <source>
        <dbReference type="PDB" id="2XB2"/>
    </source>
</evidence>
<evidence type="ECO:0007744" key="22">
    <source>
        <dbReference type="PDB" id="5XJC"/>
    </source>
</evidence>
<evidence type="ECO:0007744" key="23">
    <source>
        <dbReference type="PDB" id="5YZG"/>
    </source>
</evidence>
<evidence type="ECO:0007744" key="24">
    <source>
    </source>
</evidence>
<evidence type="ECO:0007744" key="25">
    <source>
    </source>
</evidence>
<evidence type="ECO:0007744" key="26">
    <source>
    </source>
</evidence>
<evidence type="ECO:0007744" key="27">
    <source>
    </source>
</evidence>
<evidence type="ECO:0007744" key="28">
    <source>
    </source>
</evidence>
<evidence type="ECO:0007744" key="29">
    <source>
    </source>
</evidence>
<evidence type="ECO:0007829" key="30">
    <source>
        <dbReference type="PDB" id="2HYI"/>
    </source>
</evidence>
<evidence type="ECO:0007829" key="31">
    <source>
        <dbReference type="PDB" id="2J0S"/>
    </source>
</evidence>
<evidence type="ECO:0007829" key="32">
    <source>
        <dbReference type="PDB" id="3EX7"/>
    </source>
</evidence>
<sequence length="703" mass="76278">MADRRRQRASQDTEDEESGASGSDSGGSPLRGGGSCSGSAGGGGSGSLPSQRGGRTGALHLRRVESGGAKSAEESECESEDGIEGDAVLSDYESAEDSEGEEGEYSEEENSKVELKSEANDAVNSSTKEEKGEEKPDTKSTVTGERQSGDGQESTEPVENKVGKKGPKHLDDDEDRKNPAYIPRKGLFFEHDLRGQTQEEEVRPKGRQRKLWKDEGRWEHDKFREDEQAPKSRQELIALYGYDIRSAHNPDDIKPRRIRKPRYGSPPQRDPNWNGERLNKSHRHQGLGGTLPPRTFINRNAAGTGRMSAPRNYSRSGGFKEGRAGFRPVEAGGQHGGRSGETVKHEISYRSRRLEQTSVRDPSPEADAPVLGSPEKEEAASEPPAAAPDAAPPPPDRPIEKKSYSRARRTRTKVGDAVKLAEEVPPPPEGLIPAPPVPETTPTPPTKTGTWEAPVDSSTSGLEQDVAQLNIAEQNWSPGQPSFLQPRELRGMPNHIHMGAGPPPQFNRMEEMGVQGGRAKRYSSQRQRPVPEPPAPPVHISIMEGHYYDPLQFQGPIYTHGDSPAPLPPQGMLVQPGMNLPHPGLHPHQTPAPLPNPGLYPPPVSMSPGQPPPQQLLAPTYFSAPGVMNFGNPSYPYAPGALPPPPPPHLYPNTQAPSQVYGGVTYYNPAQQQVQPKPSPPRRTPQPVTIKPPPPEVVSRGSS</sequence>
<gene>
    <name type="primary">CASC3</name>
    <name evidence="19" type="synonym">MLN51</name>
</gene>